<proteinExistence type="evidence at protein level"/>
<dbReference type="EC" id="2.7.11.1"/>
<dbReference type="EMBL" id="AY034099">
    <property type="protein sequence ID" value="AAK59695.1"/>
    <property type="molecule type" value="mRNA"/>
</dbReference>
<dbReference type="EMBL" id="AC021043">
    <property type="protein sequence ID" value="AAF88116.1"/>
    <property type="molecule type" value="Genomic_DNA"/>
</dbReference>
<dbReference type="EMBL" id="CP002684">
    <property type="protein sequence ID" value="AEE31063.1"/>
    <property type="molecule type" value="Genomic_DNA"/>
</dbReference>
<dbReference type="PIR" id="G86414">
    <property type="entry name" value="G86414"/>
</dbReference>
<dbReference type="RefSeq" id="NP_174217.1">
    <property type="nucleotide sequence ID" value="NM_102663.2"/>
</dbReference>
<dbReference type="SMR" id="Q9LP51"/>
<dbReference type="BioGRID" id="25032">
    <property type="interactions" value="5"/>
</dbReference>
<dbReference type="FunCoup" id="Q9LP51">
    <property type="interactions" value="814"/>
</dbReference>
<dbReference type="IntAct" id="Q9LP51">
    <property type="interactions" value="4"/>
</dbReference>
<dbReference type="STRING" id="3702.Q9LP51"/>
<dbReference type="PaxDb" id="3702-AT1G29230.1"/>
<dbReference type="ProteomicsDB" id="246517"/>
<dbReference type="EnsemblPlants" id="AT1G29230.1">
    <property type="protein sequence ID" value="AT1G29230.1"/>
    <property type="gene ID" value="AT1G29230"/>
</dbReference>
<dbReference type="GeneID" id="839797"/>
<dbReference type="Gramene" id="AT1G29230.1">
    <property type="protein sequence ID" value="AT1G29230.1"/>
    <property type="gene ID" value="AT1G29230"/>
</dbReference>
<dbReference type="KEGG" id="ath:AT1G29230"/>
<dbReference type="Araport" id="AT1G29230"/>
<dbReference type="TAIR" id="AT1G29230">
    <property type="gene designation" value="CIPK18"/>
</dbReference>
<dbReference type="eggNOG" id="KOG0583">
    <property type="taxonomic scope" value="Eukaryota"/>
</dbReference>
<dbReference type="HOGENOM" id="CLU_000288_59_0_1"/>
<dbReference type="InParanoid" id="Q9LP51"/>
<dbReference type="OMA" id="HDKNLMA"/>
<dbReference type="OrthoDB" id="1099823at2759"/>
<dbReference type="PhylomeDB" id="Q9LP51"/>
<dbReference type="PRO" id="PR:Q9LP51"/>
<dbReference type="Proteomes" id="UP000006548">
    <property type="component" value="Chromosome 1"/>
</dbReference>
<dbReference type="ExpressionAtlas" id="Q9LP51">
    <property type="expression patterns" value="baseline and differential"/>
</dbReference>
<dbReference type="GO" id="GO:0005524">
    <property type="term" value="F:ATP binding"/>
    <property type="evidence" value="ECO:0007669"/>
    <property type="project" value="UniProtKB-KW"/>
</dbReference>
<dbReference type="GO" id="GO:0106310">
    <property type="term" value="F:protein serine kinase activity"/>
    <property type="evidence" value="ECO:0007669"/>
    <property type="project" value="RHEA"/>
</dbReference>
<dbReference type="GO" id="GO:0004674">
    <property type="term" value="F:protein serine/threonine kinase activity"/>
    <property type="evidence" value="ECO:0007669"/>
    <property type="project" value="UniProtKB-KW"/>
</dbReference>
<dbReference type="GO" id="GO:0007165">
    <property type="term" value="P:signal transduction"/>
    <property type="evidence" value="ECO:0007669"/>
    <property type="project" value="InterPro"/>
</dbReference>
<dbReference type="CDD" id="cd12195">
    <property type="entry name" value="CIPK_C"/>
    <property type="match status" value="1"/>
</dbReference>
<dbReference type="FunFam" id="1.10.510.10:FF:000653">
    <property type="entry name" value="Non-specific serine/threonine protein kinase"/>
    <property type="match status" value="1"/>
</dbReference>
<dbReference type="FunFam" id="3.30.200.20:FF:000096">
    <property type="entry name" value="Non-specific serine/threonine protein kinase"/>
    <property type="match status" value="1"/>
</dbReference>
<dbReference type="FunFam" id="3.30.310.80:FF:000005">
    <property type="entry name" value="Non-specific serine/threonine protein kinase"/>
    <property type="match status" value="1"/>
</dbReference>
<dbReference type="Gene3D" id="3.30.310.80">
    <property type="entry name" value="Kinase associated domain 1, KA1"/>
    <property type="match status" value="1"/>
</dbReference>
<dbReference type="Gene3D" id="1.10.510.10">
    <property type="entry name" value="Transferase(Phosphotransferase) domain 1"/>
    <property type="match status" value="1"/>
</dbReference>
<dbReference type="InterPro" id="IPR011009">
    <property type="entry name" value="Kinase-like_dom_sf"/>
</dbReference>
<dbReference type="InterPro" id="IPR018451">
    <property type="entry name" value="NAF/FISL_domain"/>
</dbReference>
<dbReference type="InterPro" id="IPR004041">
    <property type="entry name" value="NAF_dom"/>
</dbReference>
<dbReference type="InterPro" id="IPR000719">
    <property type="entry name" value="Prot_kinase_dom"/>
</dbReference>
<dbReference type="InterPro" id="IPR017441">
    <property type="entry name" value="Protein_kinase_ATP_BS"/>
</dbReference>
<dbReference type="InterPro" id="IPR008271">
    <property type="entry name" value="Ser/Thr_kinase_AS"/>
</dbReference>
<dbReference type="PANTHER" id="PTHR43895">
    <property type="entry name" value="CALCIUM/CALMODULIN-DEPENDENT PROTEIN KINASE KINASE-RELATED"/>
    <property type="match status" value="1"/>
</dbReference>
<dbReference type="PANTHER" id="PTHR43895:SF62">
    <property type="entry name" value="CBL-INTERACTING SERINE_THREONINE-PROTEIN KINASE 18"/>
    <property type="match status" value="1"/>
</dbReference>
<dbReference type="Pfam" id="PF03822">
    <property type="entry name" value="NAF"/>
    <property type="match status" value="1"/>
</dbReference>
<dbReference type="Pfam" id="PF00069">
    <property type="entry name" value="Pkinase"/>
    <property type="match status" value="1"/>
</dbReference>
<dbReference type="SMART" id="SM00220">
    <property type="entry name" value="S_TKc"/>
    <property type="match status" value="1"/>
</dbReference>
<dbReference type="SUPFAM" id="SSF56112">
    <property type="entry name" value="Protein kinase-like (PK-like)"/>
    <property type="match status" value="1"/>
</dbReference>
<dbReference type="PROSITE" id="PS50816">
    <property type="entry name" value="NAF"/>
    <property type="match status" value="1"/>
</dbReference>
<dbReference type="PROSITE" id="PS00107">
    <property type="entry name" value="PROTEIN_KINASE_ATP"/>
    <property type="match status" value="1"/>
</dbReference>
<dbReference type="PROSITE" id="PS50011">
    <property type="entry name" value="PROTEIN_KINASE_DOM"/>
    <property type="match status" value="1"/>
</dbReference>
<dbReference type="PROSITE" id="PS00108">
    <property type="entry name" value="PROTEIN_KINASE_ST"/>
    <property type="match status" value="1"/>
</dbReference>
<accession>Q9LP51</accession>
<name>CIPKI_ARATH</name>
<reference key="1">
    <citation type="submission" date="2001-05" db="EMBL/GenBank/DDBJ databases">
        <title>Molecular characterization of the CIPK gene family from Arabidopsis thaliana.</title>
        <authorList>
            <person name="Weinl S."/>
            <person name="Albrecht V."/>
            <person name="Kudla J."/>
        </authorList>
    </citation>
    <scope>NUCLEOTIDE SEQUENCE [MRNA]</scope>
</reference>
<reference key="2">
    <citation type="journal article" date="2000" name="Nature">
        <title>Sequence and analysis of chromosome 1 of the plant Arabidopsis thaliana.</title>
        <authorList>
            <person name="Theologis A."/>
            <person name="Ecker J.R."/>
            <person name="Palm C.J."/>
            <person name="Federspiel N.A."/>
            <person name="Kaul S."/>
            <person name="White O."/>
            <person name="Alonso J."/>
            <person name="Altafi H."/>
            <person name="Araujo R."/>
            <person name="Bowman C.L."/>
            <person name="Brooks S.Y."/>
            <person name="Buehler E."/>
            <person name="Chan A."/>
            <person name="Chao Q."/>
            <person name="Chen H."/>
            <person name="Cheuk R.F."/>
            <person name="Chin C.W."/>
            <person name="Chung M.K."/>
            <person name="Conn L."/>
            <person name="Conway A.B."/>
            <person name="Conway A.R."/>
            <person name="Creasy T.H."/>
            <person name="Dewar K."/>
            <person name="Dunn P."/>
            <person name="Etgu P."/>
            <person name="Feldblyum T.V."/>
            <person name="Feng J.-D."/>
            <person name="Fong B."/>
            <person name="Fujii C.Y."/>
            <person name="Gill J.E."/>
            <person name="Goldsmith A.D."/>
            <person name="Haas B."/>
            <person name="Hansen N.F."/>
            <person name="Hughes B."/>
            <person name="Huizar L."/>
            <person name="Hunter J.L."/>
            <person name="Jenkins J."/>
            <person name="Johnson-Hopson C."/>
            <person name="Khan S."/>
            <person name="Khaykin E."/>
            <person name="Kim C.J."/>
            <person name="Koo H.L."/>
            <person name="Kremenetskaia I."/>
            <person name="Kurtz D.B."/>
            <person name="Kwan A."/>
            <person name="Lam B."/>
            <person name="Langin-Hooper S."/>
            <person name="Lee A."/>
            <person name="Lee J.M."/>
            <person name="Lenz C.A."/>
            <person name="Li J.H."/>
            <person name="Li Y.-P."/>
            <person name="Lin X."/>
            <person name="Liu S.X."/>
            <person name="Liu Z.A."/>
            <person name="Luros J.S."/>
            <person name="Maiti R."/>
            <person name="Marziali A."/>
            <person name="Militscher J."/>
            <person name="Miranda M."/>
            <person name="Nguyen M."/>
            <person name="Nierman W.C."/>
            <person name="Osborne B.I."/>
            <person name="Pai G."/>
            <person name="Peterson J."/>
            <person name="Pham P.K."/>
            <person name="Rizzo M."/>
            <person name="Rooney T."/>
            <person name="Rowley D."/>
            <person name="Sakano H."/>
            <person name="Salzberg S.L."/>
            <person name="Schwartz J.R."/>
            <person name="Shinn P."/>
            <person name="Southwick A.M."/>
            <person name="Sun H."/>
            <person name="Tallon L.J."/>
            <person name="Tambunga G."/>
            <person name="Toriumi M.J."/>
            <person name="Town C.D."/>
            <person name="Utterback T."/>
            <person name="Van Aken S."/>
            <person name="Vaysberg M."/>
            <person name="Vysotskaia V.S."/>
            <person name="Walker M."/>
            <person name="Wu D."/>
            <person name="Yu G."/>
            <person name="Fraser C.M."/>
            <person name="Venter J.C."/>
            <person name="Davis R.W."/>
        </authorList>
    </citation>
    <scope>NUCLEOTIDE SEQUENCE [LARGE SCALE GENOMIC DNA]</scope>
    <source>
        <strain>cv. Columbia</strain>
    </source>
</reference>
<reference key="3">
    <citation type="journal article" date="2017" name="Plant J.">
        <title>Araport11: a complete reannotation of the Arabidopsis thaliana reference genome.</title>
        <authorList>
            <person name="Cheng C.Y."/>
            <person name="Krishnakumar V."/>
            <person name="Chan A.P."/>
            <person name="Thibaud-Nissen F."/>
            <person name="Schobel S."/>
            <person name="Town C.D."/>
        </authorList>
    </citation>
    <scope>GENOME REANNOTATION</scope>
    <source>
        <strain>cv. Columbia</strain>
    </source>
</reference>
<reference key="4">
    <citation type="journal article" date="2003" name="Plant Physiol.">
        <title>The Arabidopsis CDPK-SnRK superfamily of protein kinases.</title>
        <authorList>
            <person name="Hrabak E.M."/>
            <person name="Chan C.W.M."/>
            <person name="Gribskov M."/>
            <person name="Harper J.F."/>
            <person name="Choi J.H."/>
            <person name="Halford N."/>
            <person name="Kudla J."/>
            <person name="Luan S."/>
            <person name="Nimmo H.G."/>
            <person name="Sussman M.R."/>
            <person name="Thomas M."/>
            <person name="Walker-Simmons K."/>
            <person name="Zhu J.-K."/>
            <person name="Harmon A.C."/>
        </authorList>
    </citation>
    <scope>GENE FAMILY</scope>
    <scope>NOMENCLATURE</scope>
</reference>
<reference key="5">
    <citation type="journal article" date="2004" name="Plant Physiol.">
        <title>Calcium sensors and their interacting protein kinases: genomics of the Arabidopsis and rice CBL-CIPK signaling networks.</title>
        <authorList>
            <person name="Kolukisaoglu U."/>
            <person name="Weinl S."/>
            <person name="Blazevic D."/>
            <person name="Batistic O."/>
            <person name="Kudla J."/>
        </authorList>
    </citation>
    <scope>INTERACTION WITH CBL1 AND CBL9</scope>
</reference>
<feature type="chain" id="PRO_0000337219" description="CBL-interacting serine/threonine-protein kinase 18">
    <location>
        <begin position="1"/>
        <end position="520"/>
    </location>
</feature>
<feature type="domain" description="Protein kinase" evidence="4">
    <location>
        <begin position="74"/>
        <end position="328"/>
    </location>
</feature>
<feature type="domain" description="NAF" evidence="5">
    <location>
        <begin position="382"/>
        <end position="406"/>
    </location>
</feature>
<feature type="region of interest" description="Disordered" evidence="7">
    <location>
        <begin position="1"/>
        <end position="29"/>
    </location>
</feature>
<feature type="region of interest" description="Disordered" evidence="7">
    <location>
        <begin position="48"/>
        <end position="67"/>
    </location>
</feature>
<feature type="region of interest" description="Activation loop" evidence="1">
    <location>
        <begin position="214"/>
        <end position="243"/>
    </location>
</feature>
<feature type="region of interest" description="Disordered" evidence="7">
    <location>
        <begin position="349"/>
        <end position="368"/>
    </location>
</feature>
<feature type="region of interest" description="PPI" evidence="1">
    <location>
        <begin position="410"/>
        <end position="439"/>
    </location>
</feature>
<feature type="compositionally biased region" description="Pro residues" evidence="7">
    <location>
        <begin position="17"/>
        <end position="29"/>
    </location>
</feature>
<feature type="compositionally biased region" description="Low complexity" evidence="7">
    <location>
        <begin position="55"/>
        <end position="66"/>
    </location>
</feature>
<feature type="compositionally biased region" description="Low complexity" evidence="7">
    <location>
        <begin position="356"/>
        <end position="366"/>
    </location>
</feature>
<feature type="active site" description="Proton acceptor" evidence="4 6">
    <location>
        <position position="196"/>
    </location>
</feature>
<feature type="binding site" evidence="4">
    <location>
        <begin position="80"/>
        <end position="88"/>
    </location>
    <ligand>
        <name>ATP</name>
        <dbReference type="ChEBI" id="CHEBI:30616"/>
    </ligand>
</feature>
<feature type="binding site" evidence="4">
    <location>
        <position position="103"/>
    </location>
    <ligand>
        <name>ATP</name>
        <dbReference type="ChEBI" id="CHEBI:30616"/>
    </ligand>
</feature>
<feature type="modified residue" description="Phosphoserine" evidence="3">
    <location>
        <position position="218"/>
    </location>
</feature>
<feature type="modified residue" description="Phosphothreonine" evidence="2">
    <location>
        <position position="232"/>
    </location>
</feature>
<comment type="function">
    <text evidence="1">CIPK serine-threonine protein kinases interact with CBL proteins. Binding of a CBL protein to the regulatory NAF domain of CIPK protein lead to the activation of the kinase in a calcium-dependent manner (By similarity).</text>
</comment>
<comment type="catalytic activity">
    <reaction>
        <text>L-seryl-[protein] + ATP = O-phospho-L-seryl-[protein] + ADP + H(+)</text>
        <dbReference type="Rhea" id="RHEA:17989"/>
        <dbReference type="Rhea" id="RHEA-COMP:9863"/>
        <dbReference type="Rhea" id="RHEA-COMP:11604"/>
        <dbReference type="ChEBI" id="CHEBI:15378"/>
        <dbReference type="ChEBI" id="CHEBI:29999"/>
        <dbReference type="ChEBI" id="CHEBI:30616"/>
        <dbReference type="ChEBI" id="CHEBI:83421"/>
        <dbReference type="ChEBI" id="CHEBI:456216"/>
        <dbReference type="EC" id="2.7.11.1"/>
    </reaction>
</comment>
<comment type="catalytic activity">
    <reaction>
        <text>L-threonyl-[protein] + ATP = O-phospho-L-threonyl-[protein] + ADP + H(+)</text>
        <dbReference type="Rhea" id="RHEA:46608"/>
        <dbReference type="Rhea" id="RHEA-COMP:11060"/>
        <dbReference type="Rhea" id="RHEA-COMP:11605"/>
        <dbReference type="ChEBI" id="CHEBI:15378"/>
        <dbReference type="ChEBI" id="CHEBI:30013"/>
        <dbReference type="ChEBI" id="CHEBI:30616"/>
        <dbReference type="ChEBI" id="CHEBI:61977"/>
        <dbReference type="ChEBI" id="CHEBI:456216"/>
        <dbReference type="EC" id="2.7.11.1"/>
    </reaction>
</comment>
<comment type="cofactor">
    <cofactor evidence="1">
        <name>Mn(2+)</name>
        <dbReference type="ChEBI" id="CHEBI:29035"/>
    </cofactor>
</comment>
<comment type="subunit">
    <text evidence="8">Interacts with CBL1 and CBL9.</text>
</comment>
<comment type="domain">
    <text evidence="1">The activation loop within the kinase domain is the target of phosphorylation/activation by upstream protein kinases. The PPI motif mediates the interaction with the ABI (abscisic acid-insensitive) phosphatases (By similarity).</text>
</comment>
<comment type="similarity">
    <text evidence="9">Belongs to the protein kinase superfamily. CAMK Ser/Thr protein kinase family. SNF1 subfamily.</text>
</comment>
<keyword id="KW-0067">ATP-binding</keyword>
<keyword id="KW-0418">Kinase</keyword>
<keyword id="KW-0464">Manganese</keyword>
<keyword id="KW-0547">Nucleotide-binding</keyword>
<keyword id="KW-0597">Phosphoprotein</keyword>
<keyword id="KW-1185">Reference proteome</keyword>
<keyword id="KW-0723">Serine/threonine-protein kinase</keyword>
<keyword id="KW-0808">Transferase</keyword>
<gene>
    <name type="primary">CIPK18</name>
    <name type="synonym">PKS22</name>
    <name type="synonym">SnRK3.20</name>
    <name type="ordered locus">At1g29230</name>
    <name type="ORF">F28N24.9</name>
</gene>
<sequence length="520" mass="58543">MAQALAQPPLVVTTVVPDPPPPPPPPHPKPYALRYMADLLGRIGIMDTDKDGNISPQSPRSPRSPRNNILMGKYELGKLLGHGTFAKVYLAQNIKSGDKVAIKVIDKEKIMKSGLVAHIKREISILRRVRHPYIVHLFEVMATKSKIYFVMEYVGGGELFNTVAKGRLPEETARRYFQQLISSVSFCHGRGVYHRDLKPENLLLDNKGNLKVSDFGLSAVAEQLRQDGLCHTFCGTPAYIAPEVLTRKGYDAAKADVWSCGVILFVLMAGHIPFYDKNIMVMYKKIYKGEFRCPRWFSSDLVRLLTRLLDTNPDTRITIPEIMKNRWFKKGFKHVKFYIEDDKLCREDEDEEEEASSSGRSSTVSESDAEFDVKRMGIGSMPRPSSLNAFDIISFSSGFDLSGLFEEEGGEGTRFVSGAPVSKIISKLEEIAKIVSFTVRKKEWSLRLEGCREGAKGPLTIAAEIFELTPSLVVVEVKKKGGDREEYEEFCNKELRPELEKLIHEEVVVEEALYLPSDTE</sequence>
<protein>
    <recommendedName>
        <fullName>CBL-interacting serine/threonine-protein kinase 18</fullName>
        <ecNumber>2.7.11.1</ecNumber>
    </recommendedName>
    <alternativeName>
        <fullName>SNF1-related kinase 3.20</fullName>
    </alternativeName>
    <alternativeName>
        <fullName>SOS2-like protein kinase PKS22</fullName>
    </alternativeName>
</protein>
<evidence type="ECO:0000250" key="1"/>
<evidence type="ECO:0000250" key="2">
    <source>
        <dbReference type="UniProtKB" id="Q38997"/>
    </source>
</evidence>
<evidence type="ECO:0000250" key="3">
    <source>
        <dbReference type="UniProtKB" id="Q93V58"/>
    </source>
</evidence>
<evidence type="ECO:0000255" key="4">
    <source>
        <dbReference type="PROSITE-ProRule" id="PRU00159"/>
    </source>
</evidence>
<evidence type="ECO:0000255" key="5">
    <source>
        <dbReference type="PROSITE-ProRule" id="PRU00256"/>
    </source>
</evidence>
<evidence type="ECO:0000255" key="6">
    <source>
        <dbReference type="PROSITE-ProRule" id="PRU10027"/>
    </source>
</evidence>
<evidence type="ECO:0000256" key="7">
    <source>
        <dbReference type="SAM" id="MobiDB-lite"/>
    </source>
</evidence>
<evidence type="ECO:0000269" key="8">
    <source>
    </source>
</evidence>
<evidence type="ECO:0000305" key="9"/>
<organism>
    <name type="scientific">Arabidopsis thaliana</name>
    <name type="common">Mouse-ear cress</name>
    <dbReference type="NCBI Taxonomy" id="3702"/>
    <lineage>
        <taxon>Eukaryota</taxon>
        <taxon>Viridiplantae</taxon>
        <taxon>Streptophyta</taxon>
        <taxon>Embryophyta</taxon>
        <taxon>Tracheophyta</taxon>
        <taxon>Spermatophyta</taxon>
        <taxon>Magnoliopsida</taxon>
        <taxon>eudicotyledons</taxon>
        <taxon>Gunneridae</taxon>
        <taxon>Pentapetalae</taxon>
        <taxon>rosids</taxon>
        <taxon>malvids</taxon>
        <taxon>Brassicales</taxon>
        <taxon>Brassicaceae</taxon>
        <taxon>Camelineae</taxon>
        <taxon>Arabidopsis</taxon>
    </lineage>
</organism>